<name>SP2AB_CLONN</name>
<keyword id="KW-0067">ATP-binding</keyword>
<keyword id="KW-0418">Kinase</keyword>
<keyword id="KW-0547">Nucleotide-binding</keyword>
<keyword id="KW-1185">Reference proteome</keyword>
<keyword id="KW-0723">Serine/threonine-protein kinase</keyword>
<keyword id="KW-0749">Sporulation</keyword>
<keyword id="KW-0808">Transferase</keyword>
<sequence length="143" mass="16049">MSGNKMKMEFLSKSQNESFARVAVAAFISQLDPTMEEITDVKTAVSEAVTNSIIHGYGDREDGIVKIQCEIFEKDITIIVEDDGIGIEDVKQAMTPLYTSRPDLERSGMGFTVMETFMDELRVESTEKNGTRIIMKKKLKSIE</sequence>
<reference key="1">
    <citation type="journal article" date="2006" name="Nat. Biotechnol.">
        <title>The genome and transcriptomes of the anti-tumor agent Clostridium novyi-NT.</title>
        <authorList>
            <person name="Bettegowda C."/>
            <person name="Huang X."/>
            <person name="Lin J."/>
            <person name="Cheong I."/>
            <person name="Kohli M."/>
            <person name="Szabo S.A."/>
            <person name="Zhang X."/>
            <person name="Diaz L.A. Jr."/>
            <person name="Velculescu V.E."/>
            <person name="Parmigiani G."/>
            <person name="Kinzler K.W."/>
            <person name="Vogelstein B."/>
            <person name="Zhou S."/>
        </authorList>
    </citation>
    <scope>NUCLEOTIDE SEQUENCE [LARGE SCALE GENOMIC DNA]</scope>
    <source>
        <strain>NT</strain>
    </source>
</reference>
<gene>
    <name evidence="1" type="primary">spoIIAB</name>
    <name type="ordered locus">NT01CX_1805</name>
</gene>
<proteinExistence type="inferred from homology"/>
<feature type="chain" id="PRO_1000130811" description="Anti-sigma F factor">
    <location>
        <begin position="1"/>
        <end position="143"/>
    </location>
</feature>
<evidence type="ECO:0000255" key="1">
    <source>
        <dbReference type="HAMAP-Rule" id="MF_00637"/>
    </source>
</evidence>
<protein>
    <recommendedName>
        <fullName evidence="1">Anti-sigma F factor</fullName>
        <ecNumber evidence="1">2.7.11.1</ecNumber>
    </recommendedName>
    <alternativeName>
        <fullName evidence="1">Stage II sporulation protein AB</fullName>
    </alternativeName>
</protein>
<comment type="function">
    <text evidence="1">Binds to sigma F and blocks its ability to form an RNA polymerase holoenzyme (E-sigma F). Phosphorylates SpoIIAA on a serine residue. This phosphorylation may enable SpoIIAA to act as an anti-anti-sigma factor that counteracts SpoIIAB and thus releases sigma F from inhibition.</text>
</comment>
<comment type="catalytic activity">
    <reaction evidence="1">
        <text>L-seryl-[protein] + ATP = O-phospho-L-seryl-[protein] + ADP + H(+)</text>
        <dbReference type="Rhea" id="RHEA:17989"/>
        <dbReference type="Rhea" id="RHEA-COMP:9863"/>
        <dbReference type="Rhea" id="RHEA-COMP:11604"/>
        <dbReference type="ChEBI" id="CHEBI:15378"/>
        <dbReference type="ChEBI" id="CHEBI:29999"/>
        <dbReference type="ChEBI" id="CHEBI:30616"/>
        <dbReference type="ChEBI" id="CHEBI:83421"/>
        <dbReference type="ChEBI" id="CHEBI:456216"/>
        <dbReference type="EC" id="2.7.11.1"/>
    </reaction>
</comment>
<comment type="catalytic activity">
    <reaction evidence="1">
        <text>L-threonyl-[protein] + ATP = O-phospho-L-threonyl-[protein] + ADP + H(+)</text>
        <dbReference type="Rhea" id="RHEA:46608"/>
        <dbReference type="Rhea" id="RHEA-COMP:11060"/>
        <dbReference type="Rhea" id="RHEA-COMP:11605"/>
        <dbReference type="ChEBI" id="CHEBI:15378"/>
        <dbReference type="ChEBI" id="CHEBI:30013"/>
        <dbReference type="ChEBI" id="CHEBI:30616"/>
        <dbReference type="ChEBI" id="CHEBI:61977"/>
        <dbReference type="ChEBI" id="CHEBI:456216"/>
        <dbReference type="EC" id="2.7.11.1"/>
    </reaction>
</comment>
<comment type="similarity">
    <text evidence="1">Belongs to the anti-sigma-factor family.</text>
</comment>
<organism>
    <name type="scientific">Clostridium novyi (strain NT)</name>
    <dbReference type="NCBI Taxonomy" id="386415"/>
    <lineage>
        <taxon>Bacteria</taxon>
        <taxon>Bacillati</taxon>
        <taxon>Bacillota</taxon>
        <taxon>Clostridia</taxon>
        <taxon>Eubacteriales</taxon>
        <taxon>Clostridiaceae</taxon>
        <taxon>Clostridium</taxon>
    </lineage>
</organism>
<accession>A0PZS6</accession>
<dbReference type="EC" id="2.7.11.1" evidence="1"/>
<dbReference type="EMBL" id="CP000382">
    <property type="protein sequence ID" value="ABK61462.1"/>
    <property type="molecule type" value="Genomic_DNA"/>
</dbReference>
<dbReference type="RefSeq" id="WP_011721883.1">
    <property type="nucleotide sequence ID" value="NC_008593.1"/>
</dbReference>
<dbReference type="SMR" id="A0PZS6"/>
<dbReference type="STRING" id="386415.NT01CX_1805"/>
<dbReference type="KEGG" id="cno:NT01CX_1805"/>
<dbReference type="PATRIC" id="fig|386415.7.peg.908"/>
<dbReference type="eggNOG" id="COG2172">
    <property type="taxonomic scope" value="Bacteria"/>
</dbReference>
<dbReference type="HOGENOM" id="CLU_090336_11_0_9"/>
<dbReference type="Proteomes" id="UP000008220">
    <property type="component" value="Chromosome"/>
</dbReference>
<dbReference type="GO" id="GO:0005524">
    <property type="term" value="F:ATP binding"/>
    <property type="evidence" value="ECO:0007669"/>
    <property type="project" value="UniProtKB-KW"/>
</dbReference>
<dbReference type="GO" id="GO:0106310">
    <property type="term" value="F:protein serine kinase activity"/>
    <property type="evidence" value="ECO:0007669"/>
    <property type="project" value="RHEA"/>
</dbReference>
<dbReference type="GO" id="GO:0004674">
    <property type="term" value="F:protein serine/threonine kinase activity"/>
    <property type="evidence" value="ECO:0007669"/>
    <property type="project" value="UniProtKB-KW"/>
</dbReference>
<dbReference type="GO" id="GO:0016989">
    <property type="term" value="F:sigma factor antagonist activity"/>
    <property type="evidence" value="ECO:0007669"/>
    <property type="project" value="InterPro"/>
</dbReference>
<dbReference type="GO" id="GO:0030436">
    <property type="term" value="P:asexual sporulation"/>
    <property type="evidence" value="ECO:0007669"/>
    <property type="project" value="UniProtKB-UniRule"/>
</dbReference>
<dbReference type="GO" id="GO:0042174">
    <property type="term" value="P:negative regulation of sporulation resulting in formation of a cellular spore"/>
    <property type="evidence" value="ECO:0007669"/>
    <property type="project" value="InterPro"/>
</dbReference>
<dbReference type="GO" id="GO:0030435">
    <property type="term" value="P:sporulation resulting in formation of a cellular spore"/>
    <property type="evidence" value="ECO:0007669"/>
    <property type="project" value="UniProtKB-KW"/>
</dbReference>
<dbReference type="Gene3D" id="3.30.565.10">
    <property type="entry name" value="Histidine kinase-like ATPase, C-terminal domain"/>
    <property type="match status" value="1"/>
</dbReference>
<dbReference type="HAMAP" id="MF_00637">
    <property type="entry name" value="Anti_sigma_F"/>
    <property type="match status" value="1"/>
</dbReference>
<dbReference type="InterPro" id="IPR050267">
    <property type="entry name" value="Anti-sigma-factor_SerPK"/>
</dbReference>
<dbReference type="InterPro" id="IPR010194">
    <property type="entry name" value="Anti-sigma_F"/>
</dbReference>
<dbReference type="InterPro" id="IPR036890">
    <property type="entry name" value="HATPase_C_sf"/>
</dbReference>
<dbReference type="NCBIfam" id="TIGR01925">
    <property type="entry name" value="spIIAB"/>
    <property type="match status" value="1"/>
</dbReference>
<dbReference type="PANTHER" id="PTHR35526:SF3">
    <property type="entry name" value="ANTI-SIGMA-F FACTOR RSBW"/>
    <property type="match status" value="1"/>
</dbReference>
<dbReference type="PANTHER" id="PTHR35526">
    <property type="entry name" value="ANTI-SIGMA-F FACTOR RSBW-RELATED"/>
    <property type="match status" value="1"/>
</dbReference>
<dbReference type="Pfam" id="PF13581">
    <property type="entry name" value="HATPase_c_2"/>
    <property type="match status" value="1"/>
</dbReference>
<dbReference type="SMART" id="SM00387">
    <property type="entry name" value="HATPase_c"/>
    <property type="match status" value="1"/>
</dbReference>
<dbReference type="SUPFAM" id="SSF55874">
    <property type="entry name" value="ATPase domain of HSP90 chaperone/DNA topoisomerase II/histidine kinase"/>
    <property type="match status" value="1"/>
</dbReference>